<organism>
    <name type="scientific">Staphylococcus aureus (strain JH1)</name>
    <dbReference type="NCBI Taxonomy" id="359787"/>
    <lineage>
        <taxon>Bacteria</taxon>
        <taxon>Bacillati</taxon>
        <taxon>Bacillota</taxon>
        <taxon>Bacilli</taxon>
        <taxon>Bacillales</taxon>
        <taxon>Staphylococcaceae</taxon>
        <taxon>Staphylococcus</taxon>
    </lineage>
</organism>
<evidence type="ECO:0000255" key="1">
    <source>
        <dbReference type="HAMAP-Rule" id="MF_00222"/>
    </source>
</evidence>
<proteinExistence type="inferred from homology"/>
<gene>
    <name evidence="1" type="primary">aroE</name>
    <name type="ordered locus">SaurJH1_1688</name>
</gene>
<protein>
    <recommendedName>
        <fullName evidence="1">Shikimate dehydrogenase (NADP(+))</fullName>
        <shortName evidence="1">SDH</shortName>
        <ecNumber evidence="1">1.1.1.25</ecNumber>
    </recommendedName>
</protein>
<keyword id="KW-0028">Amino-acid biosynthesis</keyword>
<keyword id="KW-0057">Aromatic amino acid biosynthesis</keyword>
<keyword id="KW-0521">NADP</keyword>
<keyword id="KW-0560">Oxidoreductase</keyword>
<comment type="function">
    <text evidence="1">Involved in the biosynthesis of the chorismate, which leads to the biosynthesis of aromatic amino acids. Catalyzes the reversible NADPH linked reduction of 3-dehydroshikimate (DHSA) to yield shikimate (SA).</text>
</comment>
<comment type="catalytic activity">
    <reaction evidence="1">
        <text>shikimate + NADP(+) = 3-dehydroshikimate + NADPH + H(+)</text>
        <dbReference type="Rhea" id="RHEA:17737"/>
        <dbReference type="ChEBI" id="CHEBI:15378"/>
        <dbReference type="ChEBI" id="CHEBI:16630"/>
        <dbReference type="ChEBI" id="CHEBI:36208"/>
        <dbReference type="ChEBI" id="CHEBI:57783"/>
        <dbReference type="ChEBI" id="CHEBI:58349"/>
        <dbReference type="EC" id="1.1.1.25"/>
    </reaction>
</comment>
<comment type="pathway">
    <text evidence="1">Metabolic intermediate biosynthesis; chorismate biosynthesis; chorismate from D-erythrose 4-phosphate and phosphoenolpyruvate: step 4/7.</text>
</comment>
<comment type="subunit">
    <text evidence="1">Homodimer.</text>
</comment>
<comment type="similarity">
    <text evidence="1">Belongs to the shikimate dehydrogenase family.</text>
</comment>
<accession>A6U268</accession>
<name>AROE_STAA2</name>
<dbReference type="EC" id="1.1.1.25" evidence="1"/>
<dbReference type="EMBL" id="CP000736">
    <property type="protein sequence ID" value="ABR52536.1"/>
    <property type="molecule type" value="Genomic_DNA"/>
</dbReference>
<dbReference type="SMR" id="A6U268"/>
<dbReference type="KEGG" id="sah:SaurJH1_1688"/>
<dbReference type="HOGENOM" id="CLU_044063_4_1_9"/>
<dbReference type="UniPathway" id="UPA00053">
    <property type="reaction ID" value="UER00087"/>
</dbReference>
<dbReference type="GO" id="GO:0005829">
    <property type="term" value="C:cytosol"/>
    <property type="evidence" value="ECO:0007669"/>
    <property type="project" value="TreeGrafter"/>
</dbReference>
<dbReference type="GO" id="GO:0050661">
    <property type="term" value="F:NADP binding"/>
    <property type="evidence" value="ECO:0007669"/>
    <property type="project" value="InterPro"/>
</dbReference>
<dbReference type="GO" id="GO:0004764">
    <property type="term" value="F:shikimate 3-dehydrogenase (NADP+) activity"/>
    <property type="evidence" value="ECO:0007669"/>
    <property type="project" value="UniProtKB-UniRule"/>
</dbReference>
<dbReference type="GO" id="GO:0008652">
    <property type="term" value="P:amino acid biosynthetic process"/>
    <property type="evidence" value="ECO:0007669"/>
    <property type="project" value="UniProtKB-KW"/>
</dbReference>
<dbReference type="GO" id="GO:0009073">
    <property type="term" value="P:aromatic amino acid family biosynthetic process"/>
    <property type="evidence" value="ECO:0007669"/>
    <property type="project" value="UniProtKB-KW"/>
</dbReference>
<dbReference type="GO" id="GO:0009423">
    <property type="term" value="P:chorismate biosynthetic process"/>
    <property type="evidence" value="ECO:0007669"/>
    <property type="project" value="UniProtKB-UniRule"/>
</dbReference>
<dbReference type="GO" id="GO:0019632">
    <property type="term" value="P:shikimate metabolic process"/>
    <property type="evidence" value="ECO:0007669"/>
    <property type="project" value="InterPro"/>
</dbReference>
<dbReference type="CDD" id="cd01065">
    <property type="entry name" value="NAD_bind_Shikimate_DH"/>
    <property type="match status" value="1"/>
</dbReference>
<dbReference type="FunFam" id="3.40.50.10860:FF:000016">
    <property type="entry name" value="Shikimate dehydrogenase (NADP(+))"/>
    <property type="match status" value="1"/>
</dbReference>
<dbReference type="FunFam" id="3.40.50.720:FF:000445">
    <property type="entry name" value="Shikimate dehydrogenase (NADP(+))"/>
    <property type="match status" value="1"/>
</dbReference>
<dbReference type="Gene3D" id="3.40.50.10860">
    <property type="entry name" value="Leucine Dehydrogenase, chain A, domain 1"/>
    <property type="match status" value="1"/>
</dbReference>
<dbReference type="Gene3D" id="3.40.50.720">
    <property type="entry name" value="NAD(P)-binding Rossmann-like Domain"/>
    <property type="match status" value="1"/>
</dbReference>
<dbReference type="HAMAP" id="MF_00222">
    <property type="entry name" value="Shikimate_DH_AroE"/>
    <property type="match status" value="1"/>
</dbReference>
<dbReference type="InterPro" id="IPR046346">
    <property type="entry name" value="Aminoacid_DH-like_N_sf"/>
</dbReference>
<dbReference type="InterPro" id="IPR036291">
    <property type="entry name" value="NAD(P)-bd_dom_sf"/>
</dbReference>
<dbReference type="InterPro" id="IPR041121">
    <property type="entry name" value="SDH_C"/>
</dbReference>
<dbReference type="InterPro" id="IPR011342">
    <property type="entry name" value="Shikimate_DH"/>
</dbReference>
<dbReference type="InterPro" id="IPR013708">
    <property type="entry name" value="Shikimate_DH-bd_N"/>
</dbReference>
<dbReference type="InterPro" id="IPR022893">
    <property type="entry name" value="Shikimate_DH_fam"/>
</dbReference>
<dbReference type="InterPro" id="IPR006151">
    <property type="entry name" value="Shikm_DH/Glu-tRNA_Rdtase"/>
</dbReference>
<dbReference type="NCBIfam" id="TIGR00507">
    <property type="entry name" value="aroE"/>
    <property type="match status" value="1"/>
</dbReference>
<dbReference type="PANTHER" id="PTHR21089:SF1">
    <property type="entry name" value="BIFUNCTIONAL 3-DEHYDROQUINATE DEHYDRATASE_SHIKIMATE DEHYDROGENASE, CHLOROPLASTIC"/>
    <property type="match status" value="1"/>
</dbReference>
<dbReference type="PANTHER" id="PTHR21089">
    <property type="entry name" value="SHIKIMATE DEHYDROGENASE"/>
    <property type="match status" value="1"/>
</dbReference>
<dbReference type="Pfam" id="PF18317">
    <property type="entry name" value="SDH_C"/>
    <property type="match status" value="1"/>
</dbReference>
<dbReference type="Pfam" id="PF01488">
    <property type="entry name" value="Shikimate_DH"/>
    <property type="match status" value="1"/>
</dbReference>
<dbReference type="Pfam" id="PF08501">
    <property type="entry name" value="Shikimate_dh_N"/>
    <property type="match status" value="1"/>
</dbReference>
<dbReference type="SUPFAM" id="SSF53223">
    <property type="entry name" value="Aminoacid dehydrogenase-like, N-terminal domain"/>
    <property type="match status" value="1"/>
</dbReference>
<dbReference type="SUPFAM" id="SSF51735">
    <property type="entry name" value="NAD(P)-binding Rossmann-fold domains"/>
    <property type="match status" value="1"/>
</dbReference>
<sequence length="268" mass="29865">MKFAVIGNPISHSLSPVMHRANFNSLGLDDTYEALNIPIEDFHLIKEIISKKELDGFNITIPHKERIIPYLDYVDEQAINAGAVNTVLIKDGKWIGYNTDGIGYVKGLHSVYPDLENAYILILGAGGASKGIAYELAKFVKPKLTVANRTMARFESWNLNINQISLADAEKYLAEFDIVINTTPAGMAGNNESIINLKHLSPNTLMSDIVYIPYKTPILEEAERKGNHIYNGLDMFVYQGAESFKIWTNKDADINSMKTAVLQQLKGE</sequence>
<feature type="chain" id="PRO_1000078129" description="Shikimate dehydrogenase (NADP(+))">
    <location>
        <begin position="1"/>
        <end position="268"/>
    </location>
</feature>
<feature type="active site" description="Proton acceptor" evidence="1">
    <location>
        <position position="64"/>
    </location>
</feature>
<feature type="binding site" evidence="1">
    <location>
        <begin position="13"/>
        <end position="15"/>
    </location>
    <ligand>
        <name>shikimate</name>
        <dbReference type="ChEBI" id="CHEBI:36208"/>
    </ligand>
</feature>
<feature type="binding site" evidence="1">
    <location>
        <position position="60"/>
    </location>
    <ligand>
        <name>shikimate</name>
        <dbReference type="ChEBI" id="CHEBI:36208"/>
    </ligand>
</feature>
<feature type="binding site" evidence="1">
    <location>
        <position position="76"/>
    </location>
    <ligand>
        <name>NADP(+)</name>
        <dbReference type="ChEBI" id="CHEBI:58349"/>
    </ligand>
</feature>
<feature type="binding site" evidence="1">
    <location>
        <position position="85"/>
    </location>
    <ligand>
        <name>shikimate</name>
        <dbReference type="ChEBI" id="CHEBI:36208"/>
    </ligand>
</feature>
<feature type="binding site" evidence="1">
    <location>
        <position position="100"/>
    </location>
    <ligand>
        <name>shikimate</name>
        <dbReference type="ChEBI" id="CHEBI:36208"/>
    </ligand>
</feature>
<feature type="binding site" evidence="1">
    <location>
        <begin position="124"/>
        <end position="128"/>
    </location>
    <ligand>
        <name>NADP(+)</name>
        <dbReference type="ChEBI" id="CHEBI:58349"/>
    </ligand>
</feature>
<feature type="binding site" evidence="1">
    <location>
        <begin position="148"/>
        <end position="153"/>
    </location>
    <ligand>
        <name>NADP(+)</name>
        <dbReference type="ChEBI" id="CHEBI:58349"/>
    </ligand>
</feature>
<feature type="binding site" evidence="1">
    <location>
        <position position="209"/>
    </location>
    <ligand>
        <name>NADP(+)</name>
        <dbReference type="ChEBI" id="CHEBI:58349"/>
    </ligand>
</feature>
<feature type="binding site" evidence="1">
    <location>
        <position position="211"/>
    </location>
    <ligand>
        <name>shikimate</name>
        <dbReference type="ChEBI" id="CHEBI:36208"/>
    </ligand>
</feature>
<feature type="binding site" evidence="1">
    <location>
        <position position="232"/>
    </location>
    <ligand>
        <name>NADP(+)</name>
        <dbReference type="ChEBI" id="CHEBI:58349"/>
    </ligand>
</feature>
<reference key="1">
    <citation type="submission" date="2007-06" db="EMBL/GenBank/DDBJ databases">
        <title>Complete sequence of chromosome of Staphylococcus aureus subsp. aureus JH1.</title>
        <authorList>
            <consortium name="US DOE Joint Genome Institute"/>
            <person name="Copeland A."/>
            <person name="Lucas S."/>
            <person name="Lapidus A."/>
            <person name="Barry K."/>
            <person name="Detter J.C."/>
            <person name="Glavina del Rio T."/>
            <person name="Hammon N."/>
            <person name="Israni S."/>
            <person name="Dalin E."/>
            <person name="Tice H."/>
            <person name="Pitluck S."/>
            <person name="Chain P."/>
            <person name="Malfatti S."/>
            <person name="Shin M."/>
            <person name="Vergez L."/>
            <person name="Schmutz J."/>
            <person name="Larimer F."/>
            <person name="Land M."/>
            <person name="Hauser L."/>
            <person name="Kyrpides N."/>
            <person name="Ivanova N."/>
            <person name="Tomasz A."/>
            <person name="Richardson P."/>
        </authorList>
    </citation>
    <scope>NUCLEOTIDE SEQUENCE [LARGE SCALE GENOMIC DNA]</scope>
    <source>
        <strain>JH1</strain>
    </source>
</reference>